<accession>Q5N1D4</accession>
<feature type="chain" id="PRO_0000224329" description="Adenylosuccinate synthetase">
    <location>
        <begin position="1"/>
        <end position="444"/>
    </location>
</feature>
<feature type="active site" description="Proton acceptor" evidence="1">
    <location>
        <position position="13"/>
    </location>
</feature>
<feature type="active site" description="Proton donor" evidence="1">
    <location>
        <position position="41"/>
    </location>
</feature>
<feature type="binding site" evidence="1">
    <location>
        <begin position="12"/>
        <end position="18"/>
    </location>
    <ligand>
        <name>GTP</name>
        <dbReference type="ChEBI" id="CHEBI:37565"/>
    </ligand>
</feature>
<feature type="binding site" description="in other chain" evidence="1">
    <location>
        <begin position="13"/>
        <end position="16"/>
    </location>
    <ligand>
        <name>IMP</name>
        <dbReference type="ChEBI" id="CHEBI:58053"/>
        <note>ligand shared between dimeric partners</note>
    </ligand>
</feature>
<feature type="binding site" evidence="1">
    <location>
        <position position="13"/>
    </location>
    <ligand>
        <name>Mg(2+)</name>
        <dbReference type="ChEBI" id="CHEBI:18420"/>
    </ligand>
</feature>
<feature type="binding site" description="in other chain" evidence="1">
    <location>
        <begin position="38"/>
        <end position="41"/>
    </location>
    <ligand>
        <name>IMP</name>
        <dbReference type="ChEBI" id="CHEBI:58053"/>
        <note>ligand shared between dimeric partners</note>
    </ligand>
</feature>
<feature type="binding site" evidence="1">
    <location>
        <begin position="40"/>
        <end position="42"/>
    </location>
    <ligand>
        <name>GTP</name>
        <dbReference type="ChEBI" id="CHEBI:37565"/>
    </ligand>
</feature>
<feature type="binding site" evidence="1">
    <location>
        <position position="40"/>
    </location>
    <ligand>
        <name>Mg(2+)</name>
        <dbReference type="ChEBI" id="CHEBI:18420"/>
    </ligand>
</feature>
<feature type="binding site" description="in other chain" evidence="1">
    <location>
        <position position="128"/>
    </location>
    <ligand>
        <name>IMP</name>
        <dbReference type="ChEBI" id="CHEBI:58053"/>
        <note>ligand shared between dimeric partners</note>
    </ligand>
</feature>
<feature type="binding site" evidence="1">
    <location>
        <position position="142"/>
    </location>
    <ligand>
        <name>IMP</name>
        <dbReference type="ChEBI" id="CHEBI:58053"/>
        <note>ligand shared between dimeric partners</note>
    </ligand>
</feature>
<feature type="binding site" description="in other chain" evidence="1">
    <location>
        <position position="223"/>
    </location>
    <ligand>
        <name>IMP</name>
        <dbReference type="ChEBI" id="CHEBI:58053"/>
        <note>ligand shared between dimeric partners</note>
    </ligand>
</feature>
<feature type="binding site" description="in other chain" evidence="1">
    <location>
        <position position="238"/>
    </location>
    <ligand>
        <name>IMP</name>
        <dbReference type="ChEBI" id="CHEBI:58053"/>
        <note>ligand shared between dimeric partners</note>
    </ligand>
</feature>
<feature type="binding site" evidence="1">
    <location>
        <begin position="298"/>
        <end position="304"/>
    </location>
    <ligand>
        <name>substrate</name>
    </ligand>
</feature>
<feature type="binding site" description="in other chain" evidence="1">
    <location>
        <position position="302"/>
    </location>
    <ligand>
        <name>IMP</name>
        <dbReference type="ChEBI" id="CHEBI:58053"/>
        <note>ligand shared between dimeric partners</note>
    </ligand>
</feature>
<feature type="binding site" evidence="1">
    <location>
        <position position="304"/>
    </location>
    <ligand>
        <name>GTP</name>
        <dbReference type="ChEBI" id="CHEBI:37565"/>
    </ligand>
</feature>
<feature type="binding site" evidence="1">
    <location>
        <begin position="330"/>
        <end position="332"/>
    </location>
    <ligand>
        <name>GTP</name>
        <dbReference type="ChEBI" id="CHEBI:37565"/>
    </ligand>
</feature>
<feature type="binding site" evidence="1">
    <location>
        <begin position="412"/>
        <end position="414"/>
    </location>
    <ligand>
        <name>GTP</name>
        <dbReference type="ChEBI" id="CHEBI:37565"/>
    </ligand>
</feature>
<sequence length="444" mass="48275">MANVVVIGAQWGDEGKGKITDLLSRSADVVVRYQGGVNAGHTVVVGEQTLKLHLIPSGILYPDTQCIIGSGTVIDPKVLLGEVEMLEQLGISTDHLLISQTAHVTMPYHRLIDQASEQQRGSHKIGTTGRGIGPTYADKSERTGIRILDLMDPEGLREQLTWTIAQKNVILDKLYGLPPLDAESVIEEYSGYAERLRPHVVDSSLTIDEAWRKRKNILFEGAQGTLLDLDHGTYPYVTSSNPVAGGACIGAGVGPTIIDRVIGVAKAYTTRVGEGPFPTELHGDIGELLCQRGAEFGTTTGRRRRCGWFDAVIGRYAVRINGIDCLAITKLDVLDDLDEIQVCVAYDIDGERCDHFPSSARSFANCQPIYKTVPGWKQSTSHCRNLEDLPKAALDYLKFLAELMEVPIAIVSLGASRDQTIIVEDPIHGPKRALLHTNGDSSAS</sequence>
<dbReference type="EC" id="6.3.4.4" evidence="1"/>
<dbReference type="EMBL" id="AP008231">
    <property type="protein sequence ID" value="BAD79886.1"/>
    <property type="molecule type" value="Genomic_DNA"/>
</dbReference>
<dbReference type="RefSeq" id="WP_011244006.1">
    <property type="nucleotide sequence ID" value="NC_006576.1"/>
</dbReference>
<dbReference type="SMR" id="Q5N1D4"/>
<dbReference type="KEGG" id="syc:syc1696_d"/>
<dbReference type="eggNOG" id="COG0104">
    <property type="taxonomic scope" value="Bacteria"/>
</dbReference>
<dbReference type="UniPathway" id="UPA00075">
    <property type="reaction ID" value="UER00335"/>
</dbReference>
<dbReference type="Proteomes" id="UP000001175">
    <property type="component" value="Chromosome"/>
</dbReference>
<dbReference type="GO" id="GO:0005737">
    <property type="term" value="C:cytoplasm"/>
    <property type="evidence" value="ECO:0007669"/>
    <property type="project" value="UniProtKB-SubCell"/>
</dbReference>
<dbReference type="GO" id="GO:0004019">
    <property type="term" value="F:adenylosuccinate synthase activity"/>
    <property type="evidence" value="ECO:0007669"/>
    <property type="project" value="UniProtKB-UniRule"/>
</dbReference>
<dbReference type="GO" id="GO:0005525">
    <property type="term" value="F:GTP binding"/>
    <property type="evidence" value="ECO:0007669"/>
    <property type="project" value="UniProtKB-UniRule"/>
</dbReference>
<dbReference type="GO" id="GO:0000287">
    <property type="term" value="F:magnesium ion binding"/>
    <property type="evidence" value="ECO:0007669"/>
    <property type="project" value="UniProtKB-UniRule"/>
</dbReference>
<dbReference type="GO" id="GO:0044208">
    <property type="term" value="P:'de novo' AMP biosynthetic process"/>
    <property type="evidence" value="ECO:0007669"/>
    <property type="project" value="UniProtKB-UniRule"/>
</dbReference>
<dbReference type="GO" id="GO:0046040">
    <property type="term" value="P:IMP metabolic process"/>
    <property type="evidence" value="ECO:0007669"/>
    <property type="project" value="TreeGrafter"/>
</dbReference>
<dbReference type="CDD" id="cd03108">
    <property type="entry name" value="AdSS"/>
    <property type="match status" value="1"/>
</dbReference>
<dbReference type="FunFam" id="1.10.300.10:FF:000001">
    <property type="entry name" value="Adenylosuccinate synthetase"/>
    <property type="match status" value="1"/>
</dbReference>
<dbReference type="FunFam" id="3.90.170.10:FF:000001">
    <property type="entry name" value="Adenylosuccinate synthetase"/>
    <property type="match status" value="1"/>
</dbReference>
<dbReference type="Gene3D" id="3.40.440.10">
    <property type="entry name" value="Adenylosuccinate Synthetase, subunit A, domain 1"/>
    <property type="match status" value="1"/>
</dbReference>
<dbReference type="Gene3D" id="1.10.300.10">
    <property type="entry name" value="Adenylosuccinate Synthetase, subunit A, domain 2"/>
    <property type="match status" value="1"/>
</dbReference>
<dbReference type="Gene3D" id="3.90.170.10">
    <property type="entry name" value="Adenylosuccinate Synthetase, subunit A, domain 3"/>
    <property type="match status" value="1"/>
</dbReference>
<dbReference type="HAMAP" id="MF_00011">
    <property type="entry name" value="Adenylosucc_synth"/>
    <property type="match status" value="1"/>
</dbReference>
<dbReference type="InterPro" id="IPR018220">
    <property type="entry name" value="Adenylosuccin_syn_GTP-bd"/>
</dbReference>
<dbReference type="InterPro" id="IPR033128">
    <property type="entry name" value="Adenylosuccin_syn_Lys_AS"/>
</dbReference>
<dbReference type="InterPro" id="IPR042109">
    <property type="entry name" value="Adenylosuccinate_synth_dom1"/>
</dbReference>
<dbReference type="InterPro" id="IPR042110">
    <property type="entry name" value="Adenylosuccinate_synth_dom2"/>
</dbReference>
<dbReference type="InterPro" id="IPR042111">
    <property type="entry name" value="Adenylosuccinate_synth_dom3"/>
</dbReference>
<dbReference type="InterPro" id="IPR001114">
    <property type="entry name" value="Adenylosuccinate_synthetase"/>
</dbReference>
<dbReference type="InterPro" id="IPR027417">
    <property type="entry name" value="P-loop_NTPase"/>
</dbReference>
<dbReference type="NCBIfam" id="NF002223">
    <property type="entry name" value="PRK01117.1"/>
    <property type="match status" value="1"/>
</dbReference>
<dbReference type="NCBIfam" id="TIGR00184">
    <property type="entry name" value="purA"/>
    <property type="match status" value="1"/>
</dbReference>
<dbReference type="PANTHER" id="PTHR11846">
    <property type="entry name" value="ADENYLOSUCCINATE SYNTHETASE"/>
    <property type="match status" value="1"/>
</dbReference>
<dbReference type="PANTHER" id="PTHR11846:SF0">
    <property type="entry name" value="ADENYLOSUCCINATE SYNTHETASE"/>
    <property type="match status" value="1"/>
</dbReference>
<dbReference type="Pfam" id="PF00709">
    <property type="entry name" value="Adenylsucc_synt"/>
    <property type="match status" value="1"/>
</dbReference>
<dbReference type="SMART" id="SM00788">
    <property type="entry name" value="Adenylsucc_synt"/>
    <property type="match status" value="1"/>
</dbReference>
<dbReference type="SUPFAM" id="SSF52540">
    <property type="entry name" value="P-loop containing nucleoside triphosphate hydrolases"/>
    <property type="match status" value="1"/>
</dbReference>
<dbReference type="PROSITE" id="PS01266">
    <property type="entry name" value="ADENYLOSUCCIN_SYN_1"/>
    <property type="match status" value="1"/>
</dbReference>
<dbReference type="PROSITE" id="PS00513">
    <property type="entry name" value="ADENYLOSUCCIN_SYN_2"/>
    <property type="match status" value="1"/>
</dbReference>
<proteinExistence type="inferred from homology"/>
<gene>
    <name evidence="1" type="primary">purA</name>
    <name type="ordered locus">syc1696_d</name>
</gene>
<comment type="function">
    <text evidence="1">Plays an important role in the de novo pathway of purine nucleotide biosynthesis. Catalyzes the first committed step in the biosynthesis of AMP from IMP.</text>
</comment>
<comment type="catalytic activity">
    <reaction evidence="1">
        <text>IMP + L-aspartate + GTP = N(6)-(1,2-dicarboxyethyl)-AMP + GDP + phosphate + 2 H(+)</text>
        <dbReference type="Rhea" id="RHEA:15753"/>
        <dbReference type="ChEBI" id="CHEBI:15378"/>
        <dbReference type="ChEBI" id="CHEBI:29991"/>
        <dbReference type="ChEBI" id="CHEBI:37565"/>
        <dbReference type="ChEBI" id="CHEBI:43474"/>
        <dbReference type="ChEBI" id="CHEBI:57567"/>
        <dbReference type="ChEBI" id="CHEBI:58053"/>
        <dbReference type="ChEBI" id="CHEBI:58189"/>
        <dbReference type="EC" id="6.3.4.4"/>
    </reaction>
</comment>
<comment type="cofactor">
    <cofactor evidence="1">
        <name>Mg(2+)</name>
        <dbReference type="ChEBI" id="CHEBI:18420"/>
    </cofactor>
    <text evidence="1">Binds 1 Mg(2+) ion per subunit.</text>
</comment>
<comment type="pathway">
    <text evidence="1">Purine metabolism; AMP biosynthesis via de novo pathway; AMP from IMP: step 1/2.</text>
</comment>
<comment type="subunit">
    <text evidence="1">Homodimer.</text>
</comment>
<comment type="subcellular location">
    <subcellularLocation>
        <location evidence="1">Cytoplasm</location>
    </subcellularLocation>
</comment>
<comment type="similarity">
    <text evidence="1">Belongs to the adenylosuccinate synthetase family.</text>
</comment>
<evidence type="ECO:0000255" key="1">
    <source>
        <dbReference type="HAMAP-Rule" id="MF_00011"/>
    </source>
</evidence>
<keyword id="KW-0963">Cytoplasm</keyword>
<keyword id="KW-0342">GTP-binding</keyword>
<keyword id="KW-0436">Ligase</keyword>
<keyword id="KW-0460">Magnesium</keyword>
<keyword id="KW-0479">Metal-binding</keyword>
<keyword id="KW-0547">Nucleotide-binding</keyword>
<keyword id="KW-0658">Purine biosynthesis</keyword>
<name>PURA_SYNP6</name>
<reference key="1">
    <citation type="journal article" date="2007" name="Photosyn. Res.">
        <title>Complete nucleotide sequence of the freshwater unicellular cyanobacterium Synechococcus elongatus PCC 6301 chromosome: gene content and organization.</title>
        <authorList>
            <person name="Sugita C."/>
            <person name="Ogata K."/>
            <person name="Shikata M."/>
            <person name="Jikuya H."/>
            <person name="Takano J."/>
            <person name="Furumichi M."/>
            <person name="Kanehisa M."/>
            <person name="Omata T."/>
            <person name="Sugiura M."/>
            <person name="Sugita M."/>
        </authorList>
    </citation>
    <scope>NUCLEOTIDE SEQUENCE [LARGE SCALE GENOMIC DNA]</scope>
    <source>
        <strain>ATCC 27144 / PCC 6301 / SAUG 1402/1</strain>
    </source>
</reference>
<organism>
    <name type="scientific">Synechococcus sp. (strain ATCC 27144 / PCC 6301 / SAUG 1402/1)</name>
    <name type="common">Anacystis nidulans</name>
    <dbReference type="NCBI Taxonomy" id="269084"/>
    <lineage>
        <taxon>Bacteria</taxon>
        <taxon>Bacillati</taxon>
        <taxon>Cyanobacteriota</taxon>
        <taxon>Cyanophyceae</taxon>
        <taxon>Synechococcales</taxon>
        <taxon>Synechococcaceae</taxon>
        <taxon>Synechococcus</taxon>
    </lineage>
</organism>
<protein>
    <recommendedName>
        <fullName evidence="1">Adenylosuccinate synthetase</fullName>
        <shortName evidence="1">AMPSase</shortName>
        <shortName evidence="1">AdSS</shortName>
        <ecNumber evidence="1">6.3.4.4</ecNumber>
    </recommendedName>
    <alternativeName>
        <fullName evidence="1">IMP--aspartate ligase</fullName>
    </alternativeName>
</protein>